<sequence>MRGELWLLVLVLREAARALSPQPGAGHDEGPGSGWAAKGTVRGWNRRARESPGHVSEPDRTQLSQDLGGGTLAMDTLPDNRTRVVEDNHSYYVSRLYGPSEPHSRELWVDVAEANRSQVKIHTILSNTHRQASRVVLSFDFPFYGHPLRQITIATGGFIFMGDVIHRMLTATQYVAPLMANFNPGYSDNSTVVYFDNGTVFVVQWDHVYLQGWEDKGSFTFQAALHHDGRIVFAYKEIPMSVPEISSSQHPVKTGLSDAFMILNPSPDVPESRRRSIFEYHRIELDPSKVTSMSAVEFTPLPTCLQHRSCDACMSSDLTFNCSWCHVLQRCSSGFDRYRQEWMDYGCAQEAEGRMCEDFQDEDHDSASPDTSFSPYDGDLTTTSSSLFIDSLTTEDDTKLNPYAGGDGLQNNLSPKTKGTPVHLGTIVGIVLAVLLVAAIILAGIYINGHPTSNAALFFIERRPHHWPAMKFRSHPDHSTYAEVEPSGHEKEGFMEAEQC</sequence>
<protein>
    <recommendedName>
        <fullName>Plexin domain-containing protein 1</fullName>
    </recommendedName>
    <alternativeName>
        <fullName>Tumor endothelial marker 3</fullName>
    </alternativeName>
    <alternativeName>
        <fullName>Tumor endothelial marker 7</fullName>
    </alternativeName>
</protein>
<name>PLDX1_HUMAN</name>
<gene>
    <name type="primary">PLXDC1</name>
    <name type="synonym">TEM3</name>
    <name type="synonym">TEM7</name>
</gene>
<keyword id="KW-0025">Alternative splicing</keyword>
<keyword id="KW-0965">Cell junction</keyword>
<keyword id="KW-1003">Cell membrane</keyword>
<keyword id="KW-0963">Cytoplasm</keyword>
<keyword id="KW-0325">Glycoprotein</keyword>
<keyword id="KW-0472">Membrane</keyword>
<keyword id="KW-0654">Proteoglycan</keyword>
<keyword id="KW-1267">Proteomics identification</keyword>
<keyword id="KW-1185">Reference proteome</keyword>
<keyword id="KW-0964">Secreted</keyword>
<keyword id="KW-0732">Signal</keyword>
<keyword id="KW-0796">Tight junction</keyword>
<keyword id="KW-0812">Transmembrane</keyword>
<keyword id="KW-1133">Transmembrane helix</keyword>
<accession>Q8IUK5</accession>
<accession>B2R7I8</accession>
<accession>Q5QCZ7</accession>
<accession>Q5QCZ8</accession>
<accession>Q5QCZ9</accession>
<accession>Q9HCT9</accession>
<proteinExistence type="evidence at protein level"/>
<reference key="1">
    <citation type="journal article" date="2000" name="Science">
        <title>Genes expressed in human tumor endothelium.</title>
        <authorList>
            <person name="St Croix B."/>
            <person name="Rago C."/>
            <person name="Velculescu V.E."/>
            <person name="Traverso G."/>
            <person name="Romans K.E."/>
            <person name="Montgomery E."/>
            <person name="Lal A."/>
            <person name="Riggins G.J."/>
            <person name="Lengauer C."/>
            <person name="Vogelstein B."/>
            <person name="Kinzler K.W."/>
        </authorList>
    </citation>
    <scope>NUCLEOTIDE SEQUENCE [MRNA] (ISOFORM 1)</scope>
    <scope>TISSUE SPECIFICITY</scope>
    <source>
        <tissue>Endothelial cell</tissue>
    </source>
</reference>
<reference key="2">
    <citation type="journal article" date="2001" name="Cancer Res.">
        <title>Cell surface tumor endothelial markers are conserved in mice and humans.</title>
        <authorList>
            <person name="Carson-Walter E.B."/>
            <person name="Watkins D.N."/>
            <person name="Nanda A."/>
            <person name="Vogelstein B."/>
            <person name="Kinzler K.W."/>
            <person name="St Croix B."/>
        </authorList>
    </citation>
    <scope>NUCLEOTIDE SEQUENCE [MRNA] (ISOFORM 1)</scope>
    <scope>TISSUE SPECIFICITY</scope>
    <scope>ALTERNATIVE SPLICING</scope>
</reference>
<reference key="3">
    <citation type="journal article" date="2004" name="Cancer Res.">
        <title>Identification of a binding partner for the endothelial cell surface proteins TEM7 and TEM7R.</title>
        <authorList>
            <person name="Nanda A."/>
            <person name="Buckhaults P."/>
            <person name="Seaman S."/>
            <person name="Agrawal N."/>
            <person name="Boutin P."/>
            <person name="Shankara S."/>
            <person name="Nacht M."/>
            <person name="Teicher B."/>
            <person name="Stampfl J."/>
            <person name="Singh S."/>
            <person name="Vogelstein B."/>
            <person name="Kinzler K.W."/>
            <person name="St Croix B."/>
        </authorList>
    </citation>
    <scope>NUCLEOTIDE SEQUENCE [MRNA] (ISOFORMS 2; 3 AND 4)</scope>
    <scope>SUBCELLULAR LOCATION</scope>
    <scope>GLYCOSYLATION</scope>
</reference>
<reference key="4">
    <citation type="journal article" date="2004" name="Nat. Genet.">
        <title>Complete sequencing and characterization of 21,243 full-length human cDNAs.</title>
        <authorList>
            <person name="Ota T."/>
            <person name="Suzuki Y."/>
            <person name="Nishikawa T."/>
            <person name="Otsuki T."/>
            <person name="Sugiyama T."/>
            <person name="Irie R."/>
            <person name="Wakamatsu A."/>
            <person name="Hayashi K."/>
            <person name="Sato H."/>
            <person name="Nagai K."/>
            <person name="Kimura K."/>
            <person name="Makita H."/>
            <person name="Sekine M."/>
            <person name="Obayashi M."/>
            <person name="Nishi T."/>
            <person name="Shibahara T."/>
            <person name="Tanaka T."/>
            <person name="Ishii S."/>
            <person name="Yamamoto J."/>
            <person name="Saito K."/>
            <person name="Kawai Y."/>
            <person name="Isono Y."/>
            <person name="Nakamura Y."/>
            <person name="Nagahari K."/>
            <person name="Murakami K."/>
            <person name="Yasuda T."/>
            <person name="Iwayanagi T."/>
            <person name="Wagatsuma M."/>
            <person name="Shiratori A."/>
            <person name="Sudo H."/>
            <person name="Hosoiri T."/>
            <person name="Kaku Y."/>
            <person name="Kodaira H."/>
            <person name="Kondo H."/>
            <person name="Sugawara M."/>
            <person name="Takahashi M."/>
            <person name="Kanda K."/>
            <person name="Yokoi T."/>
            <person name="Furuya T."/>
            <person name="Kikkawa E."/>
            <person name="Omura Y."/>
            <person name="Abe K."/>
            <person name="Kamihara K."/>
            <person name="Katsuta N."/>
            <person name="Sato K."/>
            <person name="Tanikawa M."/>
            <person name="Yamazaki M."/>
            <person name="Ninomiya K."/>
            <person name="Ishibashi T."/>
            <person name="Yamashita H."/>
            <person name="Murakawa K."/>
            <person name="Fujimori K."/>
            <person name="Tanai H."/>
            <person name="Kimata M."/>
            <person name="Watanabe M."/>
            <person name="Hiraoka S."/>
            <person name="Chiba Y."/>
            <person name="Ishida S."/>
            <person name="Ono Y."/>
            <person name="Takiguchi S."/>
            <person name="Watanabe S."/>
            <person name="Yosida M."/>
            <person name="Hotuta T."/>
            <person name="Kusano J."/>
            <person name="Kanehori K."/>
            <person name="Takahashi-Fujii A."/>
            <person name="Hara H."/>
            <person name="Tanase T.-O."/>
            <person name="Nomura Y."/>
            <person name="Togiya S."/>
            <person name="Komai F."/>
            <person name="Hara R."/>
            <person name="Takeuchi K."/>
            <person name="Arita M."/>
            <person name="Imose N."/>
            <person name="Musashino K."/>
            <person name="Yuuki H."/>
            <person name="Oshima A."/>
            <person name="Sasaki N."/>
            <person name="Aotsuka S."/>
            <person name="Yoshikawa Y."/>
            <person name="Matsunawa H."/>
            <person name="Ichihara T."/>
            <person name="Shiohata N."/>
            <person name="Sano S."/>
            <person name="Moriya S."/>
            <person name="Momiyama H."/>
            <person name="Satoh N."/>
            <person name="Takami S."/>
            <person name="Terashima Y."/>
            <person name="Suzuki O."/>
            <person name="Nakagawa S."/>
            <person name="Senoh A."/>
            <person name="Mizoguchi H."/>
            <person name="Goto Y."/>
            <person name="Shimizu F."/>
            <person name="Wakebe H."/>
            <person name="Hishigaki H."/>
            <person name="Watanabe T."/>
            <person name="Sugiyama A."/>
            <person name="Takemoto M."/>
            <person name="Kawakami B."/>
            <person name="Yamazaki M."/>
            <person name="Watanabe K."/>
            <person name="Kumagai A."/>
            <person name="Itakura S."/>
            <person name="Fukuzumi Y."/>
            <person name="Fujimori Y."/>
            <person name="Komiyama M."/>
            <person name="Tashiro H."/>
            <person name="Tanigami A."/>
            <person name="Fujiwara T."/>
            <person name="Ono T."/>
            <person name="Yamada K."/>
            <person name="Fujii Y."/>
            <person name="Ozaki K."/>
            <person name="Hirao M."/>
            <person name="Ohmori Y."/>
            <person name="Kawabata A."/>
            <person name="Hikiji T."/>
            <person name="Kobatake N."/>
            <person name="Inagaki H."/>
            <person name="Ikema Y."/>
            <person name="Okamoto S."/>
            <person name="Okitani R."/>
            <person name="Kawakami T."/>
            <person name="Noguchi S."/>
            <person name="Itoh T."/>
            <person name="Shigeta K."/>
            <person name="Senba T."/>
            <person name="Matsumura K."/>
            <person name="Nakajima Y."/>
            <person name="Mizuno T."/>
            <person name="Morinaga M."/>
            <person name="Sasaki M."/>
            <person name="Togashi T."/>
            <person name="Oyama M."/>
            <person name="Hata H."/>
            <person name="Watanabe M."/>
            <person name="Komatsu T."/>
            <person name="Mizushima-Sugano J."/>
            <person name="Satoh T."/>
            <person name="Shirai Y."/>
            <person name="Takahashi Y."/>
            <person name="Nakagawa K."/>
            <person name="Okumura K."/>
            <person name="Nagase T."/>
            <person name="Nomura N."/>
            <person name="Kikuchi H."/>
            <person name="Masuho Y."/>
            <person name="Yamashita R."/>
            <person name="Nakai K."/>
            <person name="Yada T."/>
            <person name="Nakamura Y."/>
            <person name="Ohara O."/>
            <person name="Isogai T."/>
            <person name="Sugano S."/>
        </authorList>
    </citation>
    <scope>NUCLEOTIDE SEQUENCE [LARGE SCALE MRNA] (ISOFORM 1)</scope>
    <scope>VARIANT HIS-462</scope>
    <source>
        <tissue>Cerebellum</tissue>
    </source>
</reference>
<reference key="5">
    <citation type="journal article" date="2004" name="Genome Res.">
        <title>The status, quality, and expansion of the NIH full-length cDNA project: the Mammalian Gene Collection (MGC).</title>
        <authorList>
            <consortium name="The MGC Project Team"/>
        </authorList>
    </citation>
    <scope>NUCLEOTIDE SEQUENCE [LARGE SCALE MRNA] (ISOFORM 1)</scope>
    <source>
        <tissue>Testis</tissue>
    </source>
</reference>
<reference key="6">
    <citation type="journal article" date="2006" name="FEBS Lett.">
        <title>Identification of the basement membrane protein nidogen as a candidate ligand for tumor endothelial marker 7 in vitro and in vivo.</title>
        <authorList>
            <person name="Lee H.K."/>
            <person name="Seo I.A."/>
            <person name="Park H.K."/>
            <person name="Park H.T."/>
        </authorList>
    </citation>
    <scope>INTERACTION WITH NID1</scope>
</reference>
<reference key="7">
    <citation type="journal article" date="2007" name="Gene">
        <title>High expression of tumor endothelial marker 7 is associated with metastasis and poor survival of patients with osteogenic sarcoma.</title>
        <authorList>
            <person name="Fuchs B."/>
            <person name="Mahlum E."/>
            <person name="Halder C."/>
            <person name="Maran A."/>
            <person name="Yaszemski M."/>
            <person name="Bode B."/>
            <person name="Bolander M."/>
            <person name="Sarkar G."/>
        </authorList>
    </citation>
    <scope>TISSUE SPECIFICITY</scope>
</reference>
<reference key="8">
    <citation type="journal article" date="2008" name="Invest. Ophthalmol. Vis. Sci.">
        <title>TEM7 (PLXDC1) in neovascular endothelial cells of fibrovascular membranes from patients with proliferative diabetic retinopathy.</title>
        <authorList>
            <person name="Yamaji Y."/>
            <person name="Yoshida S."/>
            <person name="Ishikawa K."/>
            <person name="Sengoku A."/>
            <person name="Sato K."/>
            <person name="Yoshida A."/>
            <person name="Kuwahara R."/>
            <person name="Ohuchida K."/>
            <person name="Oki E."/>
            <person name="Enaida H."/>
            <person name="Fujisawa K."/>
            <person name="Kono T."/>
            <person name="Ishibashi T."/>
        </authorList>
    </citation>
    <scope>TISSUE SPECIFICITY</scope>
    <scope>ALTERNATIVE SPLICING</scope>
</reference>
<reference key="9">
    <citation type="journal article" date="2015" name="Mol. Cell. Proteomics">
        <title>Identification of chondroitin sulfate linkage region glycopeptides reveals prohormones as a novel class of proteoglycans.</title>
        <authorList>
            <person name="Noborn F."/>
            <person name="Gomez Toledo A."/>
            <person name="Sihlbom C."/>
            <person name="Lengqvist J."/>
            <person name="Fries E."/>
            <person name="Kjellen L."/>
            <person name="Nilsson J."/>
            <person name="Larson G."/>
        </authorList>
    </citation>
    <scope>SUBCELLULAR LOCATION</scope>
    <scope>TISSUE SPECIFICITY</scope>
    <scope>GLYCOSYLATION AT SER-33</scope>
</reference>
<reference key="10">
    <citation type="journal article" date="2022" name="J. Proteins Proteom.">
        <title>Mass spectrometric analysis of chondroitin sulfate-linked peptides.</title>
        <authorList>
            <person name="Ramarajan M.G."/>
            <person name="Saraswat M."/>
            <person name="Budhraja R."/>
            <person name="Garapati K."/>
            <person name="Raymond K."/>
            <person name="Pandey A."/>
        </authorList>
    </citation>
    <scope>SUBCELLULAR LOCATION</scope>
    <scope>TISSUE SPECIFICITY</scope>
    <scope>GLYCOSYLATION AT SER-33</scope>
</reference>
<reference key="11">
    <citation type="journal article" date="2023" name="Mol. Cell. Proteomics">
        <title>Mapping the Human Chondroitin Sulfate Glycoproteome Reveals an Unexpected Correlation Between Glycan Sulfation and Attachment Site Characteristics.</title>
        <authorList>
            <person name="Noborn F."/>
            <person name="Nilsson J."/>
            <person name="Sihlbom C."/>
            <person name="Nikpour M."/>
            <person name="Kjellen L."/>
            <person name="Larson G."/>
        </authorList>
    </citation>
    <scope>SUBCELLULAR LOCATION</scope>
    <scope>TISSUE SPECIFICITY</scope>
    <scope>GLYCOSYLATION AT SER-33</scope>
</reference>
<evidence type="ECO:0000250" key="1"/>
<evidence type="ECO:0000255" key="2"/>
<evidence type="ECO:0000256" key="3">
    <source>
        <dbReference type="SAM" id="MobiDB-lite"/>
    </source>
</evidence>
<evidence type="ECO:0000269" key="4">
    <source>
    </source>
</evidence>
<evidence type="ECO:0000269" key="5">
    <source>
    </source>
</evidence>
<evidence type="ECO:0000269" key="6">
    <source>
    </source>
</evidence>
<evidence type="ECO:0000269" key="7">
    <source>
    </source>
</evidence>
<evidence type="ECO:0000269" key="8">
    <source>
    </source>
</evidence>
<evidence type="ECO:0000269" key="9">
    <source>
    </source>
</evidence>
<evidence type="ECO:0000269" key="10">
    <source>
    </source>
</evidence>
<evidence type="ECO:0000269" key="11">
    <source>
    </source>
</evidence>
<evidence type="ECO:0000269" key="12">
    <source>
    </source>
</evidence>
<evidence type="ECO:0000269" key="13">
    <source>
    </source>
</evidence>
<evidence type="ECO:0000303" key="14">
    <source>
    </source>
</evidence>
<evidence type="ECO:0000305" key="15"/>
<comment type="function">
    <text evidence="1">Plays a critical role in endothelial cell capillary morphogenesis.</text>
</comment>
<comment type="subunit">
    <text evidence="8">Interacts with NID1. May interact with CTTN.</text>
</comment>
<comment type="subcellular location">
    <subcellularLocation>
        <location evidence="11 12 13">Secreted</location>
    </subcellularLocation>
</comment>
<comment type="subcellular location">
    <molecule>Isoform 1</molecule>
    <subcellularLocation>
        <location>Cell membrane</location>
        <topology>Single-pass type I membrane protein</topology>
    </subcellularLocation>
    <subcellularLocation>
        <location>Cell junction</location>
        <location>Tight junction</location>
    </subcellularLocation>
    <text>Localized predominantly at the tight junctions of vascular endothelial cells and to a lesser extent at the luminal surface of vascular endothelial cells.</text>
</comment>
<comment type="subcellular location">
    <molecule>Isoform 2</molecule>
    <subcellularLocation>
        <location evidence="15">Secreted</location>
    </subcellularLocation>
</comment>
<comment type="subcellular location">
    <molecule>Isoform 3</molecule>
    <subcellularLocation>
        <location evidence="15">Secreted</location>
    </subcellularLocation>
</comment>
<comment type="subcellular location">
    <molecule>Isoform 4</molecule>
    <subcellularLocation>
        <location evidence="15">Cytoplasm</location>
    </subcellularLocation>
</comment>
<comment type="alternative products">
    <event type="alternative splicing"/>
    <isoform>
        <id>Q8IUK5-1</id>
        <name>1</name>
        <name>TEM7-M</name>
        <sequence type="displayed"/>
    </isoform>
    <isoform>
        <id>Q8IUK5-2</id>
        <name>2</name>
        <name>TEM7-S1</name>
        <sequence type="described" ref="VSP_017972 VSP_017974"/>
    </isoform>
    <isoform>
        <id>Q8IUK5-3</id>
        <name>3</name>
        <name>TEM7-S2</name>
        <sequence type="described" ref="VSP_017971 VSP_017973"/>
    </isoform>
    <isoform>
        <id>Q8IUK5-4</id>
        <name>4</name>
        <name>TEM7-I</name>
        <sequence type="described" ref="VSP_017970 VSP_017972"/>
    </isoform>
</comment>
<comment type="tissue specificity">
    <text evidence="4 5 9 10 11 12 13">Detected in urine (at protein level) (PubMed:25326458, PubMed:36213313, PubMed:37453717). Detected in endothelial cells from colorectal cancer, and in endothelial cells from primary cancers of the lung, liver, pancreas, breast and brain. Not detectable in endothelial cells from normal tissue. Expressed in fibrovascular membrane with increased expression in individuals with proliferative diabetic retinopathy.</text>
</comment>
<comment type="PTM">
    <text evidence="7">N-glycosylated.</text>
</comment>
<comment type="similarity">
    <text evidence="15">Belongs to the plexin family.</text>
</comment>
<organism>
    <name type="scientific">Homo sapiens</name>
    <name type="common">Human</name>
    <dbReference type="NCBI Taxonomy" id="9606"/>
    <lineage>
        <taxon>Eukaryota</taxon>
        <taxon>Metazoa</taxon>
        <taxon>Chordata</taxon>
        <taxon>Craniata</taxon>
        <taxon>Vertebrata</taxon>
        <taxon>Euteleostomi</taxon>
        <taxon>Mammalia</taxon>
        <taxon>Eutheria</taxon>
        <taxon>Euarchontoglires</taxon>
        <taxon>Primates</taxon>
        <taxon>Haplorrhini</taxon>
        <taxon>Catarrhini</taxon>
        <taxon>Hominidae</taxon>
        <taxon>Homo</taxon>
    </lineage>
</organism>
<feature type="signal peptide" evidence="2">
    <location>
        <begin position="1"/>
        <end position="18"/>
    </location>
</feature>
<feature type="chain" id="PRO_0000232751" description="Plexin domain-containing protein 1">
    <location>
        <begin position="19"/>
        <end position="500"/>
    </location>
</feature>
<feature type="topological domain" description="Extracellular" evidence="2">
    <location>
        <begin position="19"/>
        <end position="426"/>
    </location>
</feature>
<feature type="transmembrane region" description="Helical" evidence="2">
    <location>
        <begin position="427"/>
        <end position="447"/>
    </location>
</feature>
<feature type="topological domain" description="Cytoplasmic" evidence="2">
    <location>
        <begin position="448"/>
        <end position="500"/>
    </location>
</feature>
<feature type="region of interest" description="Disordered" evidence="3">
    <location>
        <begin position="20"/>
        <end position="39"/>
    </location>
</feature>
<feature type="region of interest" description="Disordered" evidence="3">
    <location>
        <begin position="46"/>
        <end position="78"/>
    </location>
</feature>
<feature type="region of interest" description="Disordered" evidence="3">
    <location>
        <begin position="359"/>
        <end position="379"/>
    </location>
</feature>
<feature type="region of interest" description="Disordered" evidence="3">
    <location>
        <begin position="479"/>
        <end position="500"/>
    </location>
</feature>
<feature type="compositionally biased region" description="Basic and acidic residues" evidence="3">
    <location>
        <begin position="47"/>
        <end position="60"/>
    </location>
</feature>
<feature type="compositionally biased region" description="Polar residues" evidence="3">
    <location>
        <begin position="368"/>
        <end position="379"/>
    </location>
</feature>
<feature type="compositionally biased region" description="Basic and acidic residues" evidence="3">
    <location>
        <begin position="479"/>
        <end position="494"/>
    </location>
</feature>
<feature type="glycosylation site" description="O-linked (Xyl...) (chondroitin sulfate) serine" evidence="11 12 13">
    <location>
        <position position="33"/>
    </location>
</feature>
<feature type="glycosylation site" description="N-linked (GlcNAc...) asparagine" evidence="2">
    <location>
        <position position="80"/>
    </location>
</feature>
<feature type="glycosylation site" description="N-linked (GlcNAc...) asparagine" evidence="2">
    <location>
        <position position="197"/>
    </location>
</feature>
<feature type="splice variant" id="VSP_017970" description="In isoform 4." evidence="14">
    <location>
        <begin position="1"/>
        <end position="73"/>
    </location>
</feature>
<feature type="splice variant" id="VSP_017971" description="In isoform 3." evidence="14">
    <original>RCSSGFDR</original>
    <variation>SRDEVSPC</variation>
    <location>
        <begin position="330"/>
        <end position="337"/>
    </location>
</feature>
<feature type="splice variant" id="VSP_017972" description="In isoform 2 and isoform 4." evidence="14">
    <original>CSSGFDRYRQEWMDYGCAQEAEGRMCED</original>
    <variation>SLNNQDENTYVNCLDSQQCHGSSESRRP</variation>
    <location>
        <begin position="331"/>
        <end position="358"/>
    </location>
</feature>
<feature type="splice variant" id="VSP_017973" description="In isoform 3." evidence="14">
    <location>
        <begin position="338"/>
        <end position="500"/>
    </location>
</feature>
<feature type="splice variant" id="VSP_017974" description="In isoform 2." evidence="14">
    <location>
        <begin position="359"/>
        <end position="500"/>
    </location>
</feature>
<feature type="sequence variant" id="VAR_064050" description="In dbSNP:rs75117355." evidence="6">
    <original>R</original>
    <variation>H</variation>
    <location>
        <position position="462"/>
    </location>
</feature>
<feature type="sequence conflict" description="In Ref. 5; AAH36059." evidence="15" ref="5">
    <original>I</original>
    <variation>M</variation>
    <location>
        <position position="153"/>
    </location>
</feature>
<dbReference type="EMBL" id="AF279144">
    <property type="protein sequence ID" value="AAG00869.2"/>
    <property type="molecule type" value="mRNA"/>
</dbReference>
<dbReference type="EMBL" id="AF378753">
    <property type="protein sequence ID" value="AAL11990.1"/>
    <property type="molecule type" value="mRNA"/>
</dbReference>
<dbReference type="EMBL" id="AY704670">
    <property type="protein sequence ID" value="AAV85657.1"/>
    <property type="molecule type" value="mRNA"/>
</dbReference>
<dbReference type="EMBL" id="AY704671">
    <property type="protein sequence ID" value="AAV85658.1"/>
    <property type="molecule type" value="mRNA"/>
</dbReference>
<dbReference type="EMBL" id="AY704672">
    <property type="protein sequence ID" value="AAV85659.1"/>
    <property type="molecule type" value="mRNA"/>
</dbReference>
<dbReference type="EMBL" id="AK312999">
    <property type="protein sequence ID" value="BAG35835.1"/>
    <property type="molecule type" value="mRNA"/>
</dbReference>
<dbReference type="EMBL" id="BC036059">
    <property type="protein sequence ID" value="AAH36059.1"/>
    <property type="molecule type" value="mRNA"/>
</dbReference>
<dbReference type="CCDS" id="CCDS11333.1">
    <molecule id="Q8IUK5-1"/>
</dbReference>
<dbReference type="RefSeq" id="NP_065138.2">
    <molecule id="Q8IUK5-1"/>
    <property type="nucleotide sequence ID" value="NM_020405.4"/>
</dbReference>
<dbReference type="RefSeq" id="XP_047292394.1">
    <molecule id="Q8IUK5-2"/>
    <property type="nucleotide sequence ID" value="XM_047436438.1"/>
</dbReference>
<dbReference type="RefSeq" id="XP_047292395.1">
    <molecule id="Q8IUK5-3"/>
    <property type="nucleotide sequence ID" value="XM_047436439.1"/>
</dbReference>
<dbReference type="RefSeq" id="XP_054172697.1">
    <molecule id="Q8IUK5-2"/>
    <property type="nucleotide sequence ID" value="XM_054316722.1"/>
</dbReference>
<dbReference type="RefSeq" id="XP_054172698.1">
    <molecule id="Q8IUK5-3"/>
    <property type="nucleotide sequence ID" value="XM_054316723.1"/>
</dbReference>
<dbReference type="SMR" id="Q8IUK5"/>
<dbReference type="BioGRID" id="121388">
    <property type="interactions" value="6"/>
</dbReference>
<dbReference type="FunCoup" id="Q8IUK5">
    <property type="interactions" value="37"/>
</dbReference>
<dbReference type="IntAct" id="Q8IUK5">
    <property type="interactions" value="3"/>
</dbReference>
<dbReference type="MINT" id="Q8IUK5"/>
<dbReference type="STRING" id="9606.ENSP00000323927"/>
<dbReference type="GlyCosmos" id="Q8IUK5">
    <property type="glycosylation" value="4 sites, 3 glycans"/>
</dbReference>
<dbReference type="GlyGen" id="Q8IUK5">
    <property type="glycosylation" value="6 sites, 3 N-linked glycans (2 sites), 3 O-linked glycans (2 sites)"/>
</dbReference>
<dbReference type="iPTMnet" id="Q8IUK5"/>
<dbReference type="PhosphoSitePlus" id="Q8IUK5"/>
<dbReference type="SwissPalm" id="Q8IUK5"/>
<dbReference type="BioMuta" id="PLXDC1"/>
<dbReference type="DMDM" id="93140676"/>
<dbReference type="MassIVE" id="Q8IUK5"/>
<dbReference type="PaxDb" id="9606-ENSP00000323927"/>
<dbReference type="PeptideAtlas" id="Q8IUK5"/>
<dbReference type="ProteomicsDB" id="70578">
    <molecule id="Q8IUK5-1"/>
</dbReference>
<dbReference type="ProteomicsDB" id="70579">
    <molecule id="Q8IUK5-2"/>
</dbReference>
<dbReference type="ProteomicsDB" id="70580">
    <molecule id="Q8IUK5-3"/>
</dbReference>
<dbReference type="ProteomicsDB" id="70581">
    <molecule id="Q8IUK5-4"/>
</dbReference>
<dbReference type="Antibodypedia" id="2551">
    <property type="antibodies" value="355 antibodies from 29 providers"/>
</dbReference>
<dbReference type="DNASU" id="57125"/>
<dbReference type="Ensembl" id="ENST00000315392.9">
    <molecule id="Q8IUK5-1"/>
    <property type="protein sequence ID" value="ENSP00000323927.4"/>
    <property type="gene ID" value="ENSG00000161381.14"/>
</dbReference>
<dbReference type="Ensembl" id="ENST00000578390.5">
    <molecule id="Q8IUK5-3"/>
    <property type="protein sequence ID" value="ENSP00000462089.1"/>
    <property type="gene ID" value="ENSG00000161381.14"/>
</dbReference>
<dbReference type="GeneID" id="57125"/>
<dbReference type="KEGG" id="hsa:57125"/>
<dbReference type="MANE-Select" id="ENST00000315392.9">
    <property type="protein sequence ID" value="ENSP00000323927.4"/>
    <property type="RefSeq nucleotide sequence ID" value="NM_020405.5"/>
    <property type="RefSeq protein sequence ID" value="NP_065138.2"/>
</dbReference>
<dbReference type="UCSC" id="uc002hrg.2">
    <molecule id="Q8IUK5-1"/>
    <property type="organism name" value="human"/>
</dbReference>
<dbReference type="AGR" id="HGNC:20945"/>
<dbReference type="CTD" id="57125"/>
<dbReference type="DisGeNET" id="57125"/>
<dbReference type="GeneCards" id="PLXDC1"/>
<dbReference type="HGNC" id="HGNC:20945">
    <property type="gene designation" value="PLXDC1"/>
</dbReference>
<dbReference type="HPA" id="ENSG00000161381">
    <property type="expression patterns" value="Tissue enhanced (retina)"/>
</dbReference>
<dbReference type="MIM" id="606826">
    <property type="type" value="gene"/>
</dbReference>
<dbReference type="neXtProt" id="NX_Q8IUK5"/>
<dbReference type="OpenTargets" id="ENSG00000161381"/>
<dbReference type="PharmGKB" id="PA134990658"/>
<dbReference type="VEuPathDB" id="HostDB:ENSG00000161381"/>
<dbReference type="eggNOG" id="KOG3848">
    <property type="taxonomic scope" value="Eukaryota"/>
</dbReference>
<dbReference type="GeneTree" id="ENSGT00440000033408"/>
<dbReference type="HOGENOM" id="CLU_029494_3_1_1"/>
<dbReference type="InParanoid" id="Q8IUK5"/>
<dbReference type="OMA" id="PHKHREA"/>
<dbReference type="OrthoDB" id="6285106at2759"/>
<dbReference type="PAN-GO" id="Q8IUK5">
    <property type="GO annotations" value="0 GO annotations based on evolutionary models"/>
</dbReference>
<dbReference type="PhylomeDB" id="Q8IUK5"/>
<dbReference type="TreeFam" id="TF314400"/>
<dbReference type="PathwayCommons" id="Q8IUK5"/>
<dbReference type="SignaLink" id="Q8IUK5"/>
<dbReference type="BioGRID-ORCS" id="57125">
    <property type="hits" value="15 hits in 1149 CRISPR screens"/>
</dbReference>
<dbReference type="ChiTaRS" id="PLXDC1">
    <property type="organism name" value="human"/>
</dbReference>
<dbReference type="GeneWiki" id="PLXDC1"/>
<dbReference type="GenomeRNAi" id="57125"/>
<dbReference type="Pharos" id="Q8IUK5">
    <property type="development level" value="Tbio"/>
</dbReference>
<dbReference type="PRO" id="PR:Q8IUK5"/>
<dbReference type="Proteomes" id="UP000005640">
    <property type="component" value="Chromosome 17"/>
</dbReference>
<dbReference type="RNAct" id="Q8IUK5">
    <property type="molecule type" value="protein"/>
</dbReference>
<dbReference type="Bgee" id="ENSG00000161381">
    <property type="expression patterns" value="Expressed in apex of heart and 191 other cell types or tissues"/>
</dbReference>
<dbReference type="ExpressionAtlas" id="Q8IUK5">
    <property type="expression patterns" value="baseline and differential"/>
</dbReference>
<dbReference type="GO" id="GO:0005923">
    <property type="term" value="C:bicellular tight junction"/>
    <property type="evidence" value="ECO:0007669"/>
    <property type="project" value="UniProtKB-SubCell"/>
</dbReference>
<dbReference type="GO" id="GO:0005737">
    <property type="term" value="C:cytoplasm"/>
    <property type="evidence" value="ECO:0007669"/>
    <property type="project" value="UniProtKB-SubCell"/>
</dbReference>
<dbReference type="GO" id="GO:0030425">
    <property type="term" value="C:dendrite"/>
    <property type="evidence" value="ECO:0007669"/>
    <property type="project" value="Ensembl"/>
</dbReference>
<dbReference type="GO" id="GO:0005576">
    <property type="term" value="C:extracellular region"/>
    <property type="evidence" value="ECO:0007669"/>
    <property type="project" value="UniProtKB-SubCell"/>
</dbReference>
<dbReference type="GO" id="GO:0005615">
    <property type="term" value="C:extracellular space"/>
    <property type="evidence" value="ECO:0000303"/>
    <property type="project" value="UniProtKB"/>
</dbReference>
<dbReference type="GO" id="GO:0043025">
    <property type="term" value="C:neuronal cell body"/>
    <property type="evidence" value="ECO:0007669"/>
    <property type="project" value="Ensembl"/>
</dbReference>
<dbReference type="GO" id="GO:0005886">
    <property type="term" value="C:plasma membrane"/>
    <property type="evidence" value="ECO:0000303"/>
    <property type="project" value="UniProtKB"/>
</dbReference>
<dbReference type="GO" id="GO:0043235">
    <property type="term" value="C:receptor complex"/>
    <property type="evidence" value="ECO:0000314"/>
    <property type="project" value="MGI"/>
</dbReference>
<dbReference type="GO" id="GO:0001525">
    <property type="term" value="P:angiogenesis"/>
    <property type="evidence" value="ECO:0000303"/>
    <property type="project" value="UniProtKB"/>
</dbReference>
<dbReference type="GO" id="GO:0021510">
    <property type="term" value="P:spinal cord development"/>
    <property type="evidence" value="ECO:0007669"/>
    <property type="project" value="Ensembl"/>
</dbReference>
<dbReference type="InterPro" id="IPR002165">
    <property type="entry name" value="Plexin_repeat"/>
</dbReference>
<dbReference type="InterPro" id="IPR031152">
    <property type="entry name" value="PLXDC"/>
</dbReference>
<dbReference type="PANTHER" id="PTHR13055:SF10">
    <property type="entry name" value="PLEXIN DOMAIN-CONTAINING PROTEIN 1"/>
    <property type="match status" value="1"/>
</dbReference>
<dbReference type="PANTHER" id="PTHR13055">
    <property type="entry name" value="TUMOR ENDOTHELIAL MARKER 7 RELATED"/>
    <property type="match status" value="1"/>
</dbReference>
<dbReference type="Pfam" id="PF01437">
    <property type="entry name" value="PSI"/>
    <property type="match status" value="1"/>
</dbReference>